<protein>
    <recommendedName>
        <fullName>Cuticle collagen 14</fullName>
    </recommendedName>
</protein>
<reference key="1">
    <citation type="journal article" date="1989" name="Gene">
        <title>Sequence comparisons of developmentally regulated collagen genes of Caenorhabditis elegans.</title>
        <authorList>
            <person name="Cox G.N."/>
            <person name="Fields C."/>
            <person name="Kramer J.M."/>
            <person name="Rosenzweig B."/>
            <person name="Hirsh D."/>
        </authorList>
    </citation>
    <scope>NUCLEOTIDE SEQUENCE [GENOMIC DNA]</scope>
    <source>
        <strain>Bristol N2</strain>
    </source>
</reference>
<reference key="2">
    <citation type="journal article" date="1998" name="Science">
        <title>Genome sequence of the nematode C. elegans: a platform for investigating biology.</title>
        <authorList>
            <consortium name="The C. elegans sequencing consortium"/>
        </authorList>
    </citation>
    <scope>NUCLEOTIDE SEQUENCE [LARGE SCALE GENOMIC DNA]</scope>
    <source>
        <strain>Bristol N2</strain>
    </source>
</reference>
<feature type="chain" id="PRO_0000127591" description="Cuticle collagen 14">
    <location>
        <begin position="1"/>
        <end position="345"/>
    </location>
</feature>
<feature type="region of interest" description="Triple-helical region">
    <location>
        <begin position="156"/>
        <end position="185"/>
    </location>
</feature>
<feature type="region of interest" description="Disordered" evidence="1">
    <location>
        <begin position="161"/>
        <end position="345"/>
    </location>
</feature>
<feature type="region of interest" description="Triple-helical region">
    <location>
        <begin position="207"/>
        <end position="263"/>
    </location>
</feature>
<feature type="region of interest" description="Triple-helical region">
    <location>
        <begin position="268"/>
        <end position="333"/>
    </location>
</feature>
<feature type="compositionally biased region" description="Pro residues" evidence="1">
    <location>
        <begin position="179"/>
        <end position="191"/>
    </location>
</feature>
<feature type="compositionally biased region" description="Pro residues" evidence="1">
    <location>
        <begin position="198"/>
        <end position="223"/>
    </location>
</feature>
<feature type="compositionally biased region" description="Pro residues" evidence="1">
    <location>
        <begin position="278"/>
        <end position="290"/>
    </location>
</feature>
<feature type="compositionally biased region" description="Gly residues" evidence="1">
    <location>
        <begin position="292"/>
        <end position="304"/>
    </location>
</feature>
<evidence type="ECO:0000256" key="1">
    <source>
        <dbReference type="SAM" id="MobiDB-lite"/>
    </source>
</evidence>
<evidence type="ECO:0000305" key="2"/>
<dbReference type="EMBL" id="M25480">
    <property type="protein sequence ID" value="AAA27986.1"/>
    <property type="status" value="ALT_SEQ"/>
    <property type="molecule type" value="Genomic_DNA"/>
</dbReference>
<dbReference type="EMBL" id="FO080769">
    <property type="protein sequence ID" value="CCD66588.1"/>
    <property type="molecule type" value="Genomic_DNA"/>
</dbReference>
<dbReference type="PIR" id="JS0169">
    <property type="entry name" value="JS0169"/>
</dbReference>
<dbReference type="PIR" id="T29810">
    <property type="entry name" value="T29810"/>
</dbReference>
<dbReference type="RefSeq" id="NP_001040923.1">
    <property type="nucleotide sequence ID" value="NM_001047458.7"/>
</dbReference>
<dbReference type="SMR" id="P18834"/>
<dbReference type="FunCoup" id="P18834">
    <property type="interactions" value="272"/>
</dbReference>
<dbReference type="STRING" id="6239.C46A5.3a.1"/>
<dbReference type="PaxDb" id="6239-C46A5.3a"/>
<dbReference type="EnsemblMetazoa" id="C46A5.3a.1">
    <property type="protein sequence ID" value="C46A5.3a.1"/>
    <property type="gene ID" value="WBGene00000603"/>
</dbReference>
<dbReference type="GeneID" id="177559"/>
<dbReference type="KEGG" id="cel:CELE_C46A5.3"/>
<dbReference type="AGR" id="WB:WBGene00000603"/>
<dbReference type="CTD" id="177559"/>
<dbReference type="WormBase" id="C46A5.3a">
    <property type="protein sequence ID" value="CE29723"/>
    <property type="gene ID" value="WBGene00000603"/>
    <property type="gene designation" value="col-14"/>
</dbReference>
<dbReference type="eggNOG" id="KOG3544">
    <property type="taxonomic scope" value="Eukaryota"/>
</dbReference>
<dbReference type="GeneTree" id="ENSGT00970000195927"/>
<dbReference type="InParanoid" id="P18834"/>
<dbReference type="OMA" id="TYKTEVG"/>
<dbReference type="OrthoDB" id="5866420at2759"/>
<dbReference type="PRO" id="PR:P18834"/>
<dbReference type="Proteomes" id="UP000001940">
    <property type="component" value="Chromosome IV"/>
</dbReference>
<dbReference type="Bgee" id="WBGene00000603">
    <property type="expression patterns" value="Expressed in pharyngeal muscle cell (C elegans) and 3 other cell types or tissues"/>
</dbReference>
<dbReference type="ExpressionAtlas" id="P18834">
    <property type="expression patterns" value="baseline and differential"/>
</dbReference>
<dbReference type="GO" id="GO:0005581">
    <property type="term" value="C:collagen trimer"/>
    <property type="evidence" value="ECO:0007669"/>
    <property type="project" value="UniProtKB-KW"/>
</dbReference>
<dbReference type="GO" id="GO:0005576">
    <property type="term" value="C:extracellular region"/>
    <property type="evidence" value="ECO:0000303"/>
    <property type="project" value="UniProtKB"/>
</dbReference>
<dbReference type="GO" id="GO:0042302">
    <property type="term" value="F:structural constituent of cuticle"/>
    <property type="evidence" value="ECO:0000303"/>
    <property type="project" value="UniProtKB"/>
</dbReference>
<dbReference type="GO" id="GO:0040002">
    <property type="term" value="P:collagen and cuticulin-based cuticle development"/>
    <property type="evidence" value="ECO:0000303"/>
    <property type="project" value="UniProtKB"/>
</dbReference>
<dbReference type="InterPro" id="IPR002486">
    <property type="entry name" value="Col_cuticle_N"/>
</dbReference>
<dbReference type="InterPro" id="IPR008160">
    <property type="entry name" value="Collagen"/>
</dbReference>
<dbReference type="PANTHER" id="PTHR24637">
    <property type="entry name" value="COLLAGEN"/>
    <property type="match status" value="1"/>
</dbReference>
<dbReference type="PANTHER" id="PTHR24637:SF390">
    <property type="entry name" value="CUTICLE COLLAGEN 14"/>
    <property type="match status" value="1"/>
</dbReference>
<dbReference type="Pfam" id="PF01484">
    <property type="entry name" value="Col_cuticle_N"/>
    <property type="match status" value="1"/>
</dbReference>
<dbReference type="Pfam" id="PF01391">
    <property type="entry name" value="Collagen"/>
    <property type="match status" value="2"/>
</dbReference>
<dbReference type="SMART" id="SM01088">
    <property type="entry name" value="Col_cuticle_N"/>
    <property type="match status" value="1"/>
</dbReference>
<sequence>MAKRARLRLILLAKLVSLKMSDEKEKRSLRPVAFVAVVFSTVAITSCLITFPLILHYIQTLESQVQLDLEFCQARARDMWKEMLDIETGGKKDSAKLANIVLNHRRLEKRDTLQDFWARRLHDQELRDQPVGYDNPSVGVESFNSEGGGCCTCHRGPPGPAGDGGRDGADGVDGTPGEIGPPGPPAPPGPDPHSLFPPQCPCEAPPGDGGPPGQPGPDGPPGAPGNAGEDGKPGDQGPRGPPGIPGAPGQPGRPGPPGEPGTYKTEVGPAGRAGAPGRPGPPGQPGPAGPPGENGKGGGQGPSGLPGPPGQPGQNGAPGEVGQPGDNGAPGSCDHCPPARLAPGY</sequence>
<comment type="function">
    <text>Nematode cuticles are composed largely of collagen-like proteins. The cuticle functions both as an exoskeleton and as a barrier to protect the worm from its environment.</text>
</comment>
<comment type="subunit">
    <text>Collagen polypeptide chains are complexed within the cuticle by disulfide bonds and other types of covalent cross-links.</text>
</comment>
<comment type="similarity">
    <text evidence="2">Belongs to the cuticular collagen family.</text>
</comment>
<comment type="sequence caution" evidence="2">
    <conflict type="erroneous gene model prediction">
        <sequence resource="EMBL-CDS" id="AAA27986"/>
    </conflict>
</comment>
<gene>
    <name type="primary">col-14</name>
    <name type="ORF">C46A5.3</name>
</gene>
<accession>P18834</accession>
<accession>Q18648</accession>
<proteinExistence type="inferred from homology"/>
<organism>
    <name type="scientific">Caenorhabditis elegans</name>
    <dbReference type="NCBI Taxonomy" id="6239"/>
    <lineage>
        <taxon>Eukaryota</taxon>
        <taxon>Metazoa</taxon>
        <taxon>Ecdysozoa</taxon>
        <taxon>Nematoda</taxon>
        <taxon>Chromadorea</taxon>
        <taxon>Rhabditida</taxon>
        <taxon>Rhabditina</taxon>
        <taxon>Rhabditomorpha</taxon>
        <taxon>Rhabditoidea</taxon>
        <taxon>Rhabditidae</taxon>
        <taxon>Peloderinae</taxon>
        <taxon>Caenorhabditis</taxon>
    </lineage>
</organism>
<keyword id="KW-0176">Collagen</keyword>
<keyword id="KW-0193">Cuticle</keyword>
<keyword id="KW-1015">Disulfide bond</keyword>
<keyword id="KW-1185">Reference proteome</keyword>
<keyword id="KW-0677">Repeat</keyword>
<name>COL14_CAEEL</name>